<sequence length="3916" mass="431028">MAGNQYLPKEPIAIIGTSCRFPGGANTPSKLWDLLCEKRDVQSRIPNDRFNVDAFYSTNGDKNGCTDVKNAYVLSEDIRVFDASFFKINPREAEAMDPQQRLLLEAVYEATEAAGLPMEDLKGSDTAVYVGCMTGDYHEMLMRDPQDMPKYMATGTARSILSNRISYLFDWKGPSMTIDTACSSSLVAVYDAVTALRNGVSKIACAGGANLILGPEMMISESKLHMLSPTGRSRMWDASANGYARGEGVAAIMMKTLSQALADGDHIQGVIREIGVNSDGRTNGITLPSPEAQKVLIRQTYKKAGLDFFKDRCQFFEAHGTGTPAGDPLEARAIHEAFFTDGDTVPEPMYVGSVKTAIGHLEGCAGLAGLIKALEAVKRGIIPPNQLFENLNPALKPYVSNLRLPTESKPWPKLTPGSPRRASVNSFGFGGTNVHAIIEQFDNVHTQTSSSDGIISTPLVLSANSDLSLRKQIAHFAEAIEHNDKGKIDRVIFTLTQRRSQLPLRTYFSGYDLQSLQQKLRDATAENAVLPFISQTVPPGRPPRILGVFTGQGAQWPTMGREILKASPFARAVIASLEESLASLAQPPAWTLTEQIMADKESSRLSEAAISQPLCTAVQIMVVELLRKAGITFNCVIGHSSGEITAAYTAGFLSASDAIRVAYLRGVCAKLAGGENGETGSMIAVGLSYEEASAFCEENFAGLVDVAASNAPTSTTLSGDKASIDDAKALLDAQGTFARILKVDTAYHSHHMNPCAQPYLDKLQAARVKSLPGDESVEWYSSVLGERITASLHGEALCDEYWVENMVNPVLFSVASELVAEASLPCHVALEVGPHPALKGPFNQTYKRATGSPLPYQGTVARNIHDVEGLSDSLGFLWSHLGKSAVDFTAYSQAFSPSITAMADGLPPYAWDHTQSFWRESRKSLNYRQRTQPPHPLLGARSVEDTADSMRWINYLRLDDVPWLEGHKVEGQVVYPAAGYLVMAMEAARAIDTTKGIQLIELSDVYILSAIQLTEGSQALETVFTLQVERNEPTFSTASWTLSTPMSGRNDSWKCNAKGQLRVEFGCSDDAARLPSRNKPIASLTSVNMERFYSALANIGLEYTGEFKQLKSIDRQLGLATAHVSQVVPDFPAMIHPALLDGAFQSIFAAYCWPDDGSLQAPFVPTFFRSLRIANTGHLRHGEDLVVDSFLTNTNERELTADMDVFQSSQGQPVLQLQGLTCTSLLRPGPSNAKELYTKTEWEVDIASGIAQSDTQDQDTASDLELVDLCERLSYFYLRELNNAVGREEVSGFDWHYRRIFEWIDHLFPLIQSGQHATIKTEWSSDSRDWLMQQSARFPGRIDLQLIQAVGENLPSVVRKQTTMLEHMVKDDMLNRIYKFGLGFERANVYLGRISKQIAHRYPRMNILEIGAGTGGATKGIMESLGTTFETYTFTDISTGFFEAAAEAFDHWADKMIFKPLNIESDPTEQGFPEGHYDFIIASNVLHATKSLTVTMRNTRKLLKPGGQLLLLEVTSDIVRVKLMMSGLSGWWLGGDDGRRYGPTIPVSQWDALLKQTGFSGVDKTVNDFVDAEKYMTSVMLSQAVDDRIELLRQPRLTFSDWLSSQSITVVGGYFRDIGRDILEILHQMNHGASQPVIHHVGSFEELALSNIQARSALVLEDLDEPILKDLTDDKLRGVQRLINESRQVLWVSKGCQRDEPFANMSIGMCRSLASEYPHIHLQHVDIEGRVSPMTASLLVEAFLRLVYRASLKSDDLVWSIEAELVLREDKWFIPRVKSDEALNNQLNASKMTIHSQKTLHGDTIEIQQRSNQFVIVDPVPCVPVSVSSPPVAITVTHSLLFPFQVGTKSSGYLCYGYTDSQPRTRVLAISEVNRSKVSVSPFSVWDLSSSEIDAADLLRKTALAITADRLLSDFEAGATVLIHESDELLGAALQWKAAELDLNVIMTTSESSRERSTGAMFIHALAPERLVNHIMPQHTKAVIDLSGKDYSIVGSPLRRCLPANCKFHQLQDILGNASQGVADPIIHGVRDASRSSLQLCGDGPVVKLSDLPSLRASIKDYATVVEFSANTTIPAIVQPLEGSRLFRSDRTYLLIGCTGGLGKALCRWMVSCGVRHLALTTRNVAAIDQVWLEELRIQGAQVNLYQADVSDKAALLQAYDQIVKEMPPICGTANAALLLSDRTFTELKVNDFTKVFGPKVKGTQNLHELLLDQKLDFFIMFSSLASVVGNRGQANYAASNLFMSAIAEQRRAKGLAASVMHIGMVLGVGYVSSTGAYEATLRSSNYMAISETDLLNMFSQAILVGQPNSTHAPELITGLNRFSLEPEAQKYFWRDNMRFCHHTLEEEHQERASATKVSISQRLSEAKGTAEILAVVEEEFCTKLERLLQAEAGFVKTSQSLLGLGVDSLVAAEIRSWFLKELEVDTPVLEILNTASITELCSTVVSHLPTISGEIAPKTEVTKQAIKTLNVVETSTAVSSALPTENEPFTIRNSPNSTQVTSEAGVDEDTSIHSKFDRAGPLSFAQERLWFLQQFLRDHSTYNVTMHYHISGPLRLHDLEMAFQQLIHRHESLRTSFFIDPDTDLPTQAVLKDSSFKLEQKHNSTAKIEYKAMQEMSYDLENGKVTKAVILPDSDGEFDLIFGFHHIALDGYSAQIMVRDLAIAYAGQTLPSKQQDYLDFAIAQKTAKVPDTTLAYWRSEFRELPPTLSVFDFAETKTRTPLTDYTTRALERTISIDQGRSIKAVAKCLDATPFHIHLAALQVVLSDLASTKDLCIGITDANKYDVTHIDTVGFFVNLLPLRLKISLSQTLAEVVANAKSKANSALSHSDIPFDVLLDEVKLPRSTTHSPLFQVILNYKMGSTQKVPLADCQAQLVAFKDASNPYDLTFDIETYHDGSACISVKTQEYLYSESELSFILDSYLQTLALFASEPSRTIDQICRPTAEQIDKALTLGRGERIPSPRLETLCHYFEEFVVKQPDDTALVTDKGQALTWCQLKALVNQIAMTFVEAGAKQDSRVGVYCEPSMYILPTLLAIAEVGGVYVPLDAQNPIKRLQLMVDDCQPDVILIDDSTATTARELETNAIVINVNTIKADPSNTFHMDIRARGNGMGYIFYTSGTTGVPKAVALTHTSLVHHFDGFIHYNNLSKCRMLQQAPLGFDMSLTQMTLAIMLGGTLIVASSETRKDPMQLAQLMLAEKVTHTFMTPTLALSVIHHGYEYLRQCVNWEHASLAGEAMTTRVTREFKRLGLRNLELLNGYGPTEITIIATCGSNELGDTLRDTHNPSIGRALPNYSCYILDENMQPVRPGLAGELVIGGAGVAIGYLNRQDLTEVKFLRDPFSPAEDIARGWTRMYRTGDKARFLSDGRLCFLGRIAGDSQIKLRGFRIELEDIASTIVRASDGKIPEAAVSLRGEGDSAYLVAFVILSQFNSPSDENGYLKQLLEELSLPRYMKPARIISIDQLPMNASGKLDQYALDALPVPHEEDIVDKPLTETQERLKLGWLKALPFIDAAIGPDTDFFSAGGNSLRIVSLREYITREFGVTVSVFDLFQASTLGEMAAKIDGSTTQGPTTMPIDWNEETRIDADLSIVGAQEPLPSETANDLQVALTGATGFLGVSILKTLLEDKRVSKVHCLAVRSSSNTSDPVFSSSRVACYPGDLSLPRLGLSQEQFDQLAKTVERIIHNGADVSFLKTYQSLKRSNVSSSRELARMAITRRIPVHFVSTGGVVQLTGQDGLDEVSVADSVPPTDGSLGYVASKWASEVILEKYASQYNLPVWIHRPSNITGPNAPKADLMQNIFHYSVKTASLPDLASWSGCFDFVPVDVVAAGIAGSIYETQDTVAYKHHCGREKISVEDLPSYLEAKHGKIETISVEEWLERSKAAGFDEVTAALVEKTLSRGGIVPWLRKEAN</sequence>
<reference key="1">
    <citation type="journal article" date="2012" name="Appl. Environ. Microbiol.">
        <title>Identification and regulation of fusA, the polyketide synthase gene responsible for fusarin production in Fusarium fujikuroi.</title>
        <authorList>
            <person name="Diaz-Sanchez V."/>
            <person name="Avalos J."/>
            <person name="Limon M.C."/>
        </authorList>
    </citation>
    <scope>NUCLEOTIDE SEQUENCE [GENOMIC DNA]</scope>
    <scope>FUNCTION</scope>
    <scope>INDUCTION</scope>
    <scope>DISRUPTION PHENOTYPE</scope>
    <source>
        <strain>CBS 195.34 / IMI 58289 / NRRL A-6831</strain>
    </source>
</reference>
<reference key="2">
    <citation type="journal article" date="2013" name="PLoS Pathog.">
        <title>Deciphering the cryptic genome: genome-wide analyses of the rice pathogen Fusarium fujikuroi reveal complex regulation of secondary metabolism and novel metabolites.</title>
        <authorList>
            <person name="Wiemann P."/>
            <person name="Sieber C.M.K."/>
            <person name="von Bargen K.W."/>
            <person name="Studt L."/>
            <person name="Niehaus E.-M."/>
            <person name="Espino J.J."/>
            <person name="Huss K."/>
            <person name="Michielse C.B."/>
            <person name="Albermann S."/>
            <person name="Wagner D."/>
            <person name="Bergner S.V."/>
            <person name="Connolly L.R."/>
            <person name="Fischer A."/>
            <person name="Reuter G."/>
            <person name="Kleigrewe K."/>
            <person name="Bald T."/>
            <person name="Wingfield B.D."/>
            <person name="Ophir R."/>
            <person name="Freeman S."/>
            <person name="Hippler M."/>
            <person name="Smith K.M."/>
            <person name="Brown D.W."/>
            <person name="Proctor R.H."/>
            <person name="Muensterkoetter M."/>
            <person name="Freitag M."/>
            <person name="Humpf H.-U."/>
            <person name="Gueldener U."/>
            <person name="Tudzynski B."/>
        </authorList>
    </citation>
    <scope>NUCLEOTIDE SEQUENCE [LARGE SCALE GENOMIC DNA]</scope>
    <source>
        <strain>CBS 195.34 / IMI 58289 / NRRL A-6831</strain>
    </source>
</reference>
<reference key="3">
    <citation type="journal article" date="2010" name="Mol. Microbiol.">
        <title>FfVel1 and FfLae1, components of a velvet-like complex in Fusarium fujikuroi, affect differentiation, secondary metabolism and virulence.</title>
        <authorList>
            <person name="Wiemann P."/>
            <person name="Brown D.W."/>
            <person name="Kleigrewe K."/>
            <person name="Bok J.W."/>
            <person name="Keller N.P."/>
            <person name="Humpf H.U."/>
            <person name="Tudzynski B."/>
        </authorList>
    </citation>
    <scope>INDUCTION</scope>
</reference>
<reference key="4">
    <citation type="journal article" date="2013" name="Chem. Biol.">
        <title>Genetic manipulation of the Fusarium fujikuroi fusarin gene cluster yields insight into the complex regulation and fusarin biosynthetic pathway.</title>
        <authorList>
            <person name="Niehaus E.M."/>
            <person name="Kleigrewe K."/>
            <person name="Wiemann P."/>
            <person name="Studt L."/>
            <person name="Sieber C.M."/>
            <person name="Connolly L.R."/>
            <person name="Freitag M."/>
            <person name="Gueldener U."/>
            <person name="Tudzynski B."/>
            <person name="Humpf H.U."/>
        </authorList>
    </citation>
    <scope>FUNCTION</scope>
    <scope>INDUCTION</scope>
    <scope>DISRUPTION PHENOTYPE</scope>
    <scope>CATALYTIC ACTIVITY</scope>
</reference>
<accession>S0EEY3</accession>
<accession>J7GLW4</accession>
<evidence type="ECO:0000250" key="1">
    <source>
        <dbReference type="UniProtKB" id="W7MLD7"/>
    </source>
</evidence>
<evidence type="ECO:0000255" key="2"/>
<evidence type="ECO:0000255" key="3">
    <source>
        <dbReference type="PROSITE-ProRule" id="PRU00258"/>
    </source>
</evidence>
<evidence type="ECO:0000255" key="4">
    <source>
        <dbReference type="PROSITE-ProRule" id="PRU01348"/>
    </source>
</evidence>
<evidence type="ECO:0000255" key="5">
    <source>
        <dbReference type="PROSITE-ProRule" id="PRU01363"/>
    </source>
</evidence>
<evidence type="ECO:0000256" key="6">
    <source>
        <dbReference type="SAM" id="MobiDB-lite"/>
    </source>
</evidence>
<evidence type="ECO:0000269" key="7">
    <source>
    </source>
</evidence>
<evidence type="ECO:0000269" key="8">
    <source>
    </source>
</evidence>
<evidence type="ECO:0000269" key="9">
    <source>
    </source>
</evidence>
<evidence type="ECO:0000303" key="10">
    <source>
    </source>
</evidence>
<evidence type="ECO:0000303" key="11">
    <source>
    </source>
</evidence>
<evidence type="ECO:0000305" key="12"/>
<comment type="function">
    <text evidence="8 9">Fusarin C synthetase; part of the gene cluster that mediates the biosynthesis of the mycotoxin fusarin C (PubMed:22865073, PubMed:23932525). Within the cluster, FUS1, FUS2, FUS8 and FUS9 are sufficient for fusarin production (PubMed:23932525). The roles of the other FUS members are yet undetermined (PubMed:23932525). The fusarin C synthetase FUS1 is responsible for the condensation of one acetyl-coenzyme A (CoA) unit with six malonyl-CoA units and the amide linkage of the arising heptaketide and homoserine, subsequently releasing the first intermediate, prefusarin, as an alcohol with an open ring structure (PubMed:23932525). The cytochrome P450 monooxygenase FUS8 participates in multiple oxidation processes at carbon C-20 and is able to use the FUS1 product as substrate, resulting in formation of 20-hydroxy-prefusarin (PubMed:23932525). This reaction seems to be essential before the 2-pyrrolidone ring closure can be catalyzed by FUS2, generating 20-hydroxy-fusarin (PubMed:23932525). FUS8 is able to further oxidizes carbon C-20 after ring closure, resulting in the formation of carboxy-fusarin C (PubMed:23932525). As the last step, FUS9 methylates the hydroxyl group at C-21 to generate fusarin C (PubMed:23932525). Fusarin C can then rearrange to epi-fusarin C, the (z)-isomers, and fusarin A and fusarin D (PubMed:23932525).</text>
</comment>
<comment type="pathway">
    <text evidence="9">Mycotoxin biosynthesis.</text>
</comment>
<comment type="induction">
    <text evidence="7 8 9">Expressed under high amounts of nitrogen via regulation by GLN1 (PubMed:22865073, PubMed:23932525). Moreover, components of the fungal-specific velvet complex VEL1, VEL2 and LAE1 act also as positive regulators of expression (PubMed:20572938, PubMed:23932525). Finally, expression is induced under acidic conditions in a PACC-independent manner (PubMed:23932525).</text>
</comment>
<comment type="domain">
    <text evidence="12">FUS1 is an unusual polyketide synthase (PKS) fused to a non-ribosomal peptide synthetase (NRPS) module to form a megasynthetase.</text>
</comment>
<comment type="disruption phenotype">
    <text evidence="8 9">Impairs the production of fusarin C (PubMed:22865073, PubMed:23932525).</text>
</comment>
<comment type="similarity">
    <text evidence="12">In the C-terminal section; belongs to the NRP synthetase family.</text>
</comment>
<comment type="sequence caution" evidence="12">
    <conflict type="erroneous gene model prediction">
        <sequence resource="EMBL-CDS" id="AFP73394"/>
    </conflict>
</comment>
<dbReference type="EC" id="2.3.1.-" evidence="9"/>
<dbReference type="EMBL" id="JX308619">
    <property type="protein sequence ID" value="AFP73394.1"/>
    <property type="status" value="ALT_SEQ"/>
    <property type="molecule type" value="Genomic_DNA"/>
</dbReference>
<dbReference type="EMBL" id="HF679031">
    <property type="protein sequence ID" value="CCT73260.1"/>
    <property type="molecule type" value="Genomic_DNA"/>
</dbReference>
<dbReference type="SMR" id="S0EEY3"/>
<dbReference type="STRING" id="1279085.S0EEY3"/>
<dbReference type="EnsemblFungi" id="CCT73260">
    <property type="protein sequence ID" value="CCT73260"/>
    <property type="gene ID" value="FFUJ_10058"/>
</dbReference>
<dbReference type="VEuPathDB" id="FungiDB:FFUJ_10058"/>
<dbReference type="HOGENOM" id="CLU_000022_37_5_1"/>
<dbReference type="BioCyc" id="MetaCyc:MONOMER-19357"/>
<dbReference type="Proteomes" id="UP000016800">
    <property type="component" value="Chromosome 9"/>
</dbReference>
<dbReference type="GO" id="GO:0004315">
    <property type="term" value="F:3-oxoacyl-[acyl-carrier-protein] synthase activity"/>
    <property type="evidence" value="ECO:0007669"/>
    <property type="project" value="InterPro"/>
</dbReference>
<dbReference type="GO" id="GO:0004312">
    <property type="term" value="F:fatty acid synthase activity"/>
    <property type="evidence" value="ECO:0007669"/>
    <property type="project" value="TreeGrafter"/>
</dbReference>
<dbReference type="GO" id="GO:0016853">
    <property type="term" value="F:isomerase activity"/>
    <property type="evidence" value="ECO:0007669"/>
    <property type="project" value="UniProtKB-KW"/>
</dbReference>
<dbReference type="GO" id="GO:0016874">
    <property type="term" value="F:ligase activity"/>
    <property type="evidence" value="ECO:0007669"/>
    <property type="project" value="UniProtKB-KW"/>
</dbReference>
<dbReference type="GO" id="GO:0008168">
    <property type="term" value="F:methyltransferase activity"/>
    <property type="evidence" value="ECO:0007669"/>
    <property type="project" value="UniProtKB-KW"/>
</dbReference>
<dbReference type="GO" id="GO:0016491">
    <property type="term" value="F:oxidoreductase activity"/>
    <property type="evidence" value="ECO:0007669"/>
    <property type="project" value="UniProtKB-KW"/>
</dbReference>
<dbReference type="GO" id="GO:0031177">
    <property type="term" value="F:phosphopantetheine binding"/>
    <property type="evidence" value="ECO:0007669"/>
    <property type="project" value="InterPro"/>
</dbReference>
<dbReference type="GO" id="GO:0006633">
    <property type="term" value="P:fatty acid biosynthetic process"/>
    <property type="evidence" value="ECO:0007669"/>
    <property type="project" value="InterPro"/>
</dbReference>
<dbReference type="GO" id="GO:0032259">
    <property type="term" value="P:methylation"/>
    <property type="evidence" value="ECO:0007669"/>
    <property type="project" value="UniProtKB-KW"/>
</dbReference>
<dbReference type="GO" id="GO:0009403">
    <property type="term" value="P:toxin biosynthetic process"/>
    <property type="evidence" value="ECO:0007669"/>
    <property type="project" value="UniProtKB-ARBA"/>
</dbReference>
<dbReference type="CDD" id="cd05930">
    <property type="entry name" value="A_NRPS"/>
    <property type="match status" value="1"/>
</dbReference>
<dbReference type="CDD" id="cd19532">
    <property type="entry name" value="C_PKS-NRPS"/>
    <property type="match status" value="1"/>
</dbReference>
<dbReference type="CDD" id="cd00833">
    <property type="entry name" value="PKS"/>
    <property type="match status" value="1"/>
</dbReference>
<dbReference type="FunFam" id="3.40.47.10:FF:000019">
    <property type="entry name" value="Polyketide synthase type I"/>
    <property type="match status" value="1"/>
</dbReference>
<dbReference type="Gene3D" id="3.30.300.30">
    <property type="match status" value="1"/>
</dbReference>
<dbReference type="Gene3D" id="3.40.47.10">
    <property type="match status" value="1"/>
</dbReference>
<dbReference type="Gene3D" id="1.10.1200.10">
    <property type="entry name" value="ACP-like"/>
    <property type="match status" value="2"/>
</dbReference>
<dbReference type="Gene3D" id="3.30.559.10">
    <property type="entry name" value="Chloramphenicol acetyltransferase-like domain"/>
    <property type="match status" value="1"/>
</dbReference>
<dbReference type="Gene3D" id="3.40.366.10">
    <property type="entry name" value="Malonyl-Coenzyme A Acyl Carrier Protein, domain 2"/>
    <property type="match status" value="1"/>
</dbReference>
<dbReference type="Gene3D" id="3.40.50.12780">
    <property type="entry name" value="N-terminal domain of ligase-like"/>
    <property type="match status" value="1"/>
</dbReference>
<dbReference type="Gene3D" id="3.40.50.720">
    <property type="entry name" value="NAD(P)-binding Rossmann-like Domain"/>
    <property type="match status" value="3"/>
</dbReference>
<dbReference type="Gene3D" id="3.30.559.30">
    <property type="entry name" value="Nonribosomal peptide synthetase, condensation domain"/>
    <property type="match status" value="1"/>
</dbReference>
<dbReference type="Gene3D" id="3.10.129.110">
    <property type="entry name" value="Polyketide synthase dehydratase"/>
    <property type="match status" value="1"/>
</dbReference>
<dbReference type="Gene3D" id="3.40.50.150">
    <property type="entry name" value="Vaccinia Virus protein VP39"/>
    <property type="match status" value="1"/>
</dbReference>
<dbReference type="InterPro" id="IPR010071">
    <property type="entry name" value="AA_adenyl_dom"/>
</dbReference>
<dbReference type="InterPro" id="IPR001227">
    <property type="entry name" value="Ac_transferase_dom_sf"/>
</dbReference>
<dbReference type="InterPro" id="IPR036736">
    <property type="entry name" value="ACP-like_sf"/>
</dbReference>
<dbReference type="InterPro" id="IPR014043">
    <property type="entry name" value="Acyl_transferase_dom"/>
</dbReference>
<dbReference type="InterPro" id="IPR016035">
    <property type="entry name" value="Acyl_Trfase/lysoPLipase"/>
</dbReference>
<dbReference type="InterPro" id="IPR045851">
    <property type="entry name" value="AMP-bd_C_sf"/>
</dbReference>
<dbReference type="InterPro" id="IPR020845">
    <property type="entry name" value="AMP-binding_CS"/>
</dbReference>
<dbReference type="InterPro" id="IPR000873">
    <property type="entry name" value="AMP-dep_synth/lig_dom"/>
</dbReference>
<dbReference type="InterPro" id="IPR042099">
    <property type="entry name" value="ANL_N_sf"/>
</dbReference>
<dbReference type="InterPro" id="IPR023213">
    <property type="entry name" value="CAT-like_dom_sf"/>
</dbReference>
<dbReference type="InterPro" id="IPR001242">
    <property type="entry name" value="Condensatn"/>
</dbReference>
<dbReference type="InterPro" id="IPR013120">
    <property type="entry name" value="Far_NAD-bd"/>
</dbReference>
<dbReference type="InterPro" id="IPR018201">
    <property type="entry name" value="Ketoacyl_synth_AS"/>
</dbReference>
<dbReference type="InterPro" id="IPR014031">
    <property type="entry name" value="Ketoacyl_synth_C"/>
</dbReference>
<dbReference type="InterPro" id="IPR014030">
    <property type="entry name" value="Ketoacyl_synth_N"/>
</dbReference>
<dbReference type="InterPro" id="IPR016036">
    <property type="entry name" value="Malonyl_transacylase_ACP-bd"/>
</dbReference>
<dbReference type="InterPro" id="IPR013217">
    <property type="entry name" value="Methyltransf_12"/>
</dbReference>
<dbReference type="InterPro" id="IPR036291">
    <property type="entry name" value="NAD(P)-bd_dom_sf"/>
</dbReference>
<dbReference type="InterPro" id="IPR032821">
    <property type="entry name" value="PKS_assoc"/>
</dbReference>
<dbReference type="InterPro" id="IPR020841">
    <property type="entry name" value="PKS_Beta-ketoAc_synthase_dom"/>
</dbReference>
<dbReference type="InterPro" id="IPR042104">
    <property type="entry name" value="PKS_dehydratase_sf"/>
</dbReference>
<dbReference type="InterPro" id="IPR020807">
    <property type="entry name" value="PKS_DH"/>
</dbReference>
<dbReference type="InterPro" id="IPR049551">
    <property type="entry name" value="PKS_DH_C"/>
</dbReference>
<dbReference type="InterPro" id="IPR049552">
    <property type="entry name" value="PKS_DH_N"/>
</dbReference>
<dbReference type="InterPro" id="IPR013968">
    <property type="entry name" value="PKS_KR"/>
</dbReference>
<dbReference type="InterPro" id="IPR049900">
    <property type="entry name" value="PKS_mFAS_DH"/>
</dbReference>
<dbReference type="InterPro" id="IPR050091">
    <property type="entry name" value="PKS_NRPS_Biosynth_Enz"/>
</dbReference>
<dbReference type="InterPro" id="IPR020806">
    <property type="entry name" value="PKS_PP-bd"/>
</dbReference>
<dbReference type="InterPro" id="IPR009081">
    <property type="entry name" value="PP-bd_ACP"/>
</dbReference>
<dbReference type="InterPro" id="IPR006162">
    <property type="entry name" value="Ppantetheine_attach_site"/>
</dbReference>
<dbReference type="InterPro" id="IPR029063">
    <property type="entry name" value="SAM-dependent_MTases_sf"/>
</dbReference>
<dbReference type="InterPro" id="IPR016039">
    <property type="entry name" value="Thiolase-like"/>
</dbReference>
<dbReference type="NCBIfam" id="TIGR01733">
    <property type="entry name" value="AA-adenyl-dom"/>
    <property type="match status" value="1"/>
</dbReference>
<dbReference type="PANTHER" id="PTHR43775">
    <property type="entry name" value="FATTY ACID SYNTHASE"/>
    <property type="match status" value="1"/>
</dbReference>
<dbReference type="PANTHER" id="PTHR43775:SF20">
    <property type="entry name" value="HYBRID PKS-NRPS SYNTHETASE APDA"/>
    <property type="match status" value="1"/>
</dbReference>
<dbReference type="Pfam" id="PF00698">
    <property type="entry name" value="Acyl_transf_1"/>
    <property type="match status" value="1"/>
</dbReference>
<dbReference type="Pfam" id="PF00501">
    <property type="entry name" value="AMP-binding"/>
    <property type="match status" value="1"/>
</dbReference>
<dbReference type="Pfam" id="PF00668">
    <property type="entry name" value="Condensation"/>
    <property type="match status" value="1"/>
</dbReference>
<dbReference type="Pfam" id="PF16197">
    <property type="entry name" value="KAsynt_C_assoc"/>
    <property type="match status" value="1"/>
</dbReference>
<dbReference type="Pfam" id="PF00109">
    <property type="entry name" value="ketoacyl-synt"/>
    <property type="match status" value="1"/>
</dbReference>
<dbReference type="Pfam" id="PF02801">
    <property type="entry name" value="Ketoacyl-synt_C"/>
    <property type="match status" value="1"/>
</dbReference>
<dbReference type="Pfam" id="PF08659">
    <property type="entry name" value="KR"/>
    <property type="match status" value="1"/>
</dbReference>
<dbReference type="Pfam" id="PF08242">
    <property type="entry name" value="Methyltransf_12"/>
    <property type="match status" value="1"/>
</dbReference>
<dbReference type="Pfam" id="PF07993">
    <property type="entry name" value="NAD_binding_4"/>
    <property type="match status" value="1"/>
</dbReference>
<dbReference type="Pfam" id="PF21089">
    <property type="entry name" value="PKS_DH_N"/>
    <property type="match status" value="1"/>
</dbReference>
<dbReference type="Pfam" id="PF00550">
    <property type="entry name" value="PP-binding"/>
    <property type="match status" value="2"/>
</dbReference>
<dbReference type="Pfam" id="PF14765">
    <property type="entry name" value="PS-DH"/>
    <property type="match status" value="1"/>
</dbReference>
<dbReference type="SMART" id="SM00827">
    <property type="entry name" value="PKS_AT"/>
    <property type="match status" value="1"/>
</dbReference>
<dbReference type="SMART" id="SM00826">
    <property type="entry name" value="PKS_DH"/>
    <property type="match status" value="1"/>
</dbReference>
<dbReference type="SMART" id="SM00822">
    <property type="entry name" value="PKS_KR"/>
    <property type="match status" value="1"/>
</dbReference>
<dbReference type="SMART" id="SM00825">
    <property type="entry name" value="PKS_KS"/>
    <property type="match status" value="1"/>
</dbReference>
<dbReference type="SMART" id="SM00823">
    <property type="entry name" value="PKS_PP"/>
    <property type="match status" value="2"/>
</dbReference>
<dbReference type="SUPFAM" id="SSF56801">
    <property type="entry name" value="Acetyl-CoA synthetase-like"/>
    <property type="match status" value="1"/>
</dbReference>
<dbReference type="SUPFAM" id="SSF47336">
    <property type="entry name" value="ACP-like"/>
    <property type="match status" value="2"/>
</dbReference>
<dbReference type="SUPFAM" id="SSF52777">
    <property type="entry name" value="CoA-dependent acyltransferases"/>
    <property type="match status" value="2"/>
</dbReference>
<dbReference type="SUPFAM" id="SSF52151">
    <property type="entry name" value="FabD/lysophospholipase-like"/>
    <property type="match status" value="1"/>
</dbReference>
<dbReference type="SUPFAM" id="SSF51735">
    <property type="entry name" value="NAD(P)-binding Rossmann-fold domains"/>
    <property type="match status" value="2"/>
</dbReference>
<dbReference type="SUPFAM" id="SSF55048">
    <property type="entry name" value="Probable ACP-binding domain of malonyl-CoA ACP transacylase"/>
    <property type="match status" value="1"/>
</dbReference>
<dbReference type="SUPFAM" id="SSF53335">
    <property type="entry name" value="S-adenosyl-L-methionine-dependent methyltransferases"/>
    <property type="match status" value="1"/>
</dbReference>
<dbReference type="SUPFAM" id="SSF53901">
    <property type="entry name" value="Thiolase-like"/>
    <property type="match status" value="1"/>
</dbReference>
<dbReference type="PROSITE" id="PS00061">
    <property type="entry name" value="ADH_SHORT"/>
    <property type="match status" value="1"/>
</dbReference>
<dbReference type="PROSITE" id="PS00455">
    <property type="entry name" value="AMP_BINDING"/>
    <property type="match status" value="1"/>
</dbReference>
<dbReference type="PROSITE" id="PS50075">
    <property type="entry name" value="CARRIER"/>
    <property type="match status" value="2"/>
</dbReference>
<dbReference type="PROSITE" id="PS00606">
    <property type="entry name" value="KS3_1"/>
    <property type="match status" value="1"/>
</dbReference>
<dbReference type="PROSITE" id="PS52004">
    <property type="entry name" value="KS3_2"/>
    <property type="match status" value="1"/>
</dbReference>
<dbReference type="PROSITE" id="PS00012">
    <property type="entry name" value="PHOSPHOPANTETHEINE"/>
    <property type="match status" value="1"/>
</dbReference>
<dbReference type="PROSITE" id="PS52019">
    <property type="entry name" value="PKS_MFAS_DH"/>
    <property type="match status" value="1"/>
</dbReference>
<organism>
    <name type="scientific">Gibberella fujikuroi (strain CBS 195.34 / IMI 58289 / NRRL A-6831)</name>
    <name type="common">Bakanae and foot rot disease fungus</name>
    <name type="synonym">Fusarium fujikuroi</name>
    <dbReference type="NCBI Taxonomy" id="1279085"/>
    <lineage>
        <taxon>Eukaryota</taxon>
        <taxon>Fungi</taxon>
        <taxon>Dikarya</taxon>
        <taxon>Ascomycota</taxon>
        <taxon>Pezizomycotina</taxon>
        <taxon>Sordariomycetes</taxon>
        <taxon>Hypocreomycetidae</taxon>
        <taxon>Hypocreales</taxon>
        <taxon>Nectriaceae</taxon>
        <taxon>Fusarium</taxon>
        <taxon>Fusarium fujikuroi species complex</taxon>
    </lineage>
</organism>
<feature type="chain" id="PRO_0000437355" description="Fusarin C synthetase">
    <location>
        <begin position="1"/>
        <end position="3916"/>
    </location>
</feature>
<feature type="domain" description="Ketosynthase family 3 (KS3)" evidence="4">
    <location>
        <begin position="9"/>
        <end position="440"/>
    </location>
</feature>
<feature type="domain" description="PKS/mFAS DH" evidence="5">
    <location>
        <begin position="935"/>
        <end position="1231"/>
    </location>
</feature>
<feature type="domain" description="Carrier 1" evidence="3">
    <location>
        <begin position="2372"/>
        <end position="2449"/>
    </location>
</feature>
<feature type="domain" description="Carrier 2" evidence="3">
    <location>
        <begin position="3493"/>
        <end position="3570"/>
    </location>
</feature>
<feature type="region of interest" description="Malonyl-CoA:ACP transacylase (MAT) domain" evidence="2">
    <location>
        <begin position="548"/>
        <end position="866"/>
    </location>
</feature>
<feature type="region of interest" description="Dehydratase (DH) domain" evidence="2">
    <location>
        <begin position="935"/>
        <end position="1228"/>
    </location>
</feature>
<feature type="region of interest" description="N-terminal hotdog fold" evidence="5">
    <location>
        <begin position="935"/>
        <end position="1068"/>
    </location>
</feature>
<feature type="region of interest" description="C-terminal hotdog fold" evidence="5">
    <location>
        <begin position="1084"/>
        <end position="1231"/>
    </location>
</feature>
<feature type="region of interest" description="C-methyltransferase (CMeT) domain" evidence="2">
    <location>
        <begin position="1347"/>
        <end position="1575"/>
    </location>
</feature>
<feature type="region of interest" description="Ketoreductase (KR) domain 1" evidence="2">
    <location>
        <begin position="2092"/>
        <end position="2266"/>
    </location>
</feature>
<feature type="region of interest" description="Disordered" evidence="6">
    <location>
        <begin position="2487"/>
        <end position="2510"/>
    </location>
</feature>
<feature type="region of interest" description="Condensation" evidence="2">
    <location>
        <begin position="2522"/>
        <end position="2806"/>
    </location>
</feature>
<feature type="region of interest" description="Adenylation" evidence="2">
    <location>
        <begin position="2975"/>
        <end position="3385"/>
    </location>
</feature>
<feature type="region of interest" description="Thiolester reductase (R) domain" evidence="2">
    <location>
        <begin position="3612"/>
        <end position="3833"/>
    </location>
</feature>
<feature type="compositionally biased region" description="Polar residues" evidence="6">
    <location>
        <begin position="2492"/>
        <end position="2503"/>
    </location>
</feature>
<feature type="active site" description="For beta-ketoacyl synthase activity" evidence="4">
    <location>
        <position position="182"/>
    </location>
</feature>
<feature type="active site" description="For beta-ketoacyl synthase activity" evidence="4">
    <location>
        <position position="319"/>
    </location>
</feature>
<feature type="active site" description="For beta-ketoacyl synthase activity" evidence="4">
    <location>
        <position position="360"/>
    </location>
</feature>
<feature type="active site" description="Proton acceptor; for dehydratase activity" evidence="5">
    <location>
        <position position="967"/>
    </location>
</feature>
<feature type="active site" description="Proton donor; for dehydratase activity" evidence="5">
    <location>
        <position position="1141"/>
    </location>
</feature>
<feature type="modified residue" description="O-(pantetheine 4'-phosphoryl)serine" evidence="3">
    <location>
        <position position="2409"/>
    </location>
</feature>
<feature type="modified residue" description="O-(pantetheine 4'-phosphoryl)serine" evidence="3">
    <location>
        <position position="3530"/>
    </location>
</feature>
<name>FUS1_GIBF5</name>
<protein>
    <recommendedName>
        <fullName evidence="1">Fusarin C synthetase</fullName>
        <shortName evidence="1">FUSS</shortName>
        <ecNumber evidence="9">2.3.1.-</ecNumber>
    </recommendedName>
    <alternativeName>
        <fullName evidence="11">Fusarin C cluster PKS/NRPS FUS1</fullName>
    </alternativeName>
    <alternativeName>
        <fullName evidence="1">Fusarin biosynthesis megasynthetase</fullName>
    </alternativeName>
    <alternativeName>
        <fullName evidence="11">Fusarin biosynthesis protein 1</fullName>
    </alternativeName>
</protein>
<proteinExistence type="evidence at protein level"/>
<keyword id="KW-0413">Isomerase</keyword>
<keyword id="KW-0436">Ligase</keyword>
<keyword id="KW-0489">Methyltransferase</keyword>
<keyword id="KW-0511">Multifunctional enzyme</keyword>
<keyword id="KW-0560">Oxidoreductase</keyword>
<keyword id="KW-0596">Phosphopantetheine</keyword>
<keyword id="KW-0597">Phosphoprotein</keyword>
<keyword id="KW-1185">Reference proteome</keyword>
<keyword id="KW-0677">Repeat</keyword>
<keyword id="KW-0808">Transferase</keyword>
<gene>
    <name evidence="11" type="primary">FUS1</name>
    <name evidence="10" type="synonym">fusA</name>
    <name type="ORF">FFUJ_10058</name>
</gene>